<sequence length="93" mass="10266">MAVLTDEQVDAALPDLNGWERADGALRRSVKFSAFLDGIDAVRRVAEHAEAKDHHPDIDIRWRTVTFALVTHSEGGITDKDVQMARDIDGILG</sequence>
<proteinExistence type="inferred from homology"/>
<feature type="chain" id="PRO_1000050427" description="Putative pterin-4-alpha-carbinolamine dehydratase">
    <location>
        <begin position="1"/>
        <end position="93"/>
    </location>
</feature>
<evidence type="ECO:0000255" key="1">
    <source>
        <dbReference type="HAMAP-Rule" id="MF_00434"/>
    </source>
</evidence>
<protein>
    <recommendedName>
        <fullName evidence="1">Putative pterin-4-alpha-carbinolamine dehydratase</fullName>
        <shortName evidence="1">PHS</shortName>
        <ecNumber evidence="1">4.2.1.96</ecNumber>
    </recommendedName>
    <alternativeName>
        <fullName evidence="1">4-alpha-hydroxy-tetrahydropterin dehydratase</fullName>
    </alternativeName>
    <alternativeName>
        <fullName evidence="1">Pterin carbinolamine dehydratase</fullName>
        <shortName evidence="1">PCD</shortName>
    </alternativeName>
</protein>
<comment type="catalytic activity">
    <reaction evidence="1">
        <text>(4aS,6R)-4a-hydroxy-L-erythro-5,6,7,8-tetrahydrobiopterin = (6R)-L-erythro-6,7-dihydrobiopterin + H2O</text>
        <dbReference type="Rhea" id="RHEA:11920"/>
        <dbReference type="ChEBI" id="CHEBI:15377"/>
        <dbReference type="ChEBI" id="CHEBI:15642"/>
        <dbReference type="ChEBI" id="CHEBI:43120"/>
        <dbReference type="EC" id="4.2.1.96"/>
    </reaction>
</comment>
<comment type="similarity">
    <text evidence="1">Belongs to the pterin-4-alpha-carbinolamine dehydratase family.</text>
</comment>
<keyword id="KW-0456">Lyase</keyword>
<name>PHS_MYCVP</name>
<dbReference type="EC" id="4.2.1.96" evidence="1"/>
<dbReference type="EMBL" id="CP000511">
    <property type="protein sequence ID" value="ABM15324.1"/>
    <property type="molecule type" value="Genomic_DNA"/>
</dbReference>
<dbReference type="SMR" id="A1TDS4"/>
<dbReference type="STRING" id="350058.Mvan_4549"/>
<dbReference type="KEGG" id="mva:Mvan_4549"/>
<dbReference type="eggNOG" id="COG2154">
    <property type="taxonomic scope" value="Bacteria"/>
</dbReference>
<dbReference type="HOGENOM" id="CLU_081974_4_3_11"/>
<dbReference type="Proteomes" id="UP000009159">
    <property type="component" value="Chromosome"/>
</dbReference>
<dbReference type="GO" id="GO:0008124">
    <property type="term" value="F:4-alpha-hydroxytetrahydrobiopterin dehydratase activity"/>
    <property type="evidence" value="ECO:0007669"/>
    <property type="project" value="UniProtKB-UniRule"/>
</dbReference>
<dbReference type="GO" id="GO:0006729">
    <property type="term" value="P:tetrahydrobiopterin biosynthetic process"/>
    <property type="evidence" value="ECO:0007669"/>
    <property type="project" value="InterPro"/>
</dbReference>
<dbReference type="CDD" id="cd00488">
    <property type="entry name" value="PCD_DCoH"/>
    <property type="match status" value="1"/>
</dbReference>
<dbReference type="Gene3D" id="3.30.1360.20">
    <property type="entry name" value="Transcriptional coactivator/pterin dehydratase"/>
    <property type="match status" value="1"/>
</dbReference>
<dbReference type="HAMAP" id="MF_00434">
    <property type="entry name" value="Pterin_4_alpha"/>
    <property type="match status" value="1"/>
</dbReference>
<dbReference type="InterPro" id="IPR036428">
    <property type="entry name" value="PCD_sf"/>
</dbReference>
<dbReference type="InterPro" id="IPR001533">
    <property type="entry name" value="Pterin_deHydtase"/>
</dbReference>
<dbReference type="NCBIfam" id="NF002017">
    <property type="entry name" value="PRK00823.1-2"/>
    <property type="match status" value="1"/>
</dbReference>
<dbReference type="PANTHER" id="PTHR12599">
    <property type="entry name" value="PTERIN-4-ALPHA-CARBINOLAMINE DEHYDRATASE"/>
    <property type="match status" value="1"/>
</dbReference>
<dbReference type="PANTHER" id="PTHR12599:SF0">
    <property type="entry name" value="PTERIN-4-ALPHA-CARBINOLAMINE DEHYDRATASE"/>
    <property type="match status" value="1"/>
</dbReference>
<dbReference type="Pfam" id="PF01329">
    <property type="entry name" value="Pterin_4a"/>
    <property type="match status" value="1"/>
</dbReference>
<dbReference type="SUPFAM" id="SSF55248">
    <property type="entry name" value="PCD-like"/>
    <property type="match status" value="1"/>
</dbReference>
<accession>A1TDS4</accession>
<reference key="1">
    <citation type="submission" date="2006-12" db="EMBL/GenBank/DDBJ databases">
        <title>Complete sequence of Mycobacterium vanbaalenii PYR-1.</title>
        <authorList>
            <consortium name="US DOE Joint Genome Institute"/>
            <person name="Copeland A."/>
            <person name="Lucas S."/>
            <person name="Lapidus A."/>
            <person name="Barry K."/>
            <person name="Detter J.C."/>
            <person name="Glavina del Rio T."/>
            <person name="Hammon N."/>
            <person name="Israni S."/>
            <person name="Dalin E."/>
            <person name="Tice H."/>
            <person name="Pitluck S."/>
            <person name="Singan V."/>
            <person name="Schmutz J."/>
            <person name="Larimer F."/>
            <person name="Land M."/>
            <person name="Hauser L."/>
            <person name="Kyrpides N."/>
            <person name="Anderson I.J."/>
            <person name="Miller C."/>
            <person name="Richardson P."/>
        </authorList>
    </citation>
    <scope>NUCLEOTIDE SEQUENCE [LARGE SCALE GENOMIC DNA]</scope>
    <source>
        <strain>DSM 7251 / JCM 13017 / BCRC 16820 / KCTC 9966 / NRRL B-24157 / PYR-1</strain>
    </source>
</reference>
<organism>
    <name type="scientific">Mycolicibacterium vanbaalenii (strain DSM 7251 / JCM 13017 / BCRC 16820 / KCTC 9966 / NRRL B-24157 / PYR-1)</name>
    <name type="common">Mycobacterium vanbaalenii</name>
    <dbReference type="NCBI Taxonomy" id="350058"/>
    <lineage>
        <taxon>Bacteria</taxon>
        <taxon>Bacillati</taxon>
        <taxon>Actinomycetota</taxon>
        <taxon>Actinomycetes</taxon>
        <taxon>Mycobacteriales</taxon>
        <taxon>Mycobacteriaceae</taxon>
        <taxon>Mycolicibacterium</taxon>
    </lineage>
</organism>
<gene>
    <name type="ordered locus">Mvan_4549</name>
</gene>